<protein>
    <recommendedName>
        <fullName>EKC/KEOPS complex subunit CGI121</fullName>
    </recommendedName>
    <alternativeName>
        <fullName>CGI-121 homolog</fullName>
    </alternativeName>
</protein>
<evidence type="ECO:0000269" key="1">
    <source>
    </source>
</evidence>
<evidence type="ECO:0000269" key="2">
    <source>
    </source>
</evidence>
<evidence type="ECO:0000269" key="3">
    <source>
    </source>
</evidence>
<evidence type="ECO:0000269" key="4">
    <source>
    </source>
</evidence>
<evidence type="ECO:0000269" key="5">
    <source>
    </source>
</evidence>
<evidence type="ECO:0000269" key="6">
    <source>
    </source>
</evidence>
<evidence type="ECO:0000305" key="7"/>
<evidence type="ECO:0007829" key="8">
    <source>
        <dbReference type="PDB" id="4WW5"/>
    </source>
</evidence>
<evidence type="ECO:0007829" key="9">
    <source>
        <dbReference type="PDB" id="4WW7"/>
    </source>
</evidence>
<evidence type="ECO:0007829" key="10">
    <source>
        <dbReference type="PDB" id="4WW9"/>
    </source>
</evidence>
<evidence type="ECO:0007829" key="11">
    <source>
        <dbReference type="PDB" id="4XAH"/>
    </source>
</evidence>
<sequence>MVVSIIPQFPDIKVSLALFEQVKNAKEIRSKMSELSTSFAFIDPRLVCSGEQMYSAIYKTLIEVKYNKMRTRNLNSECVLCLSPTSNISDAFLKFGIKDDSSQLICLKFHTNTDDVDKEQLRTIMTSIVKGQEIEFNDDNLSRFYDEALIRKIYKLSDDFKPQDVNGLSRALVDAIQLRGV</sequence>
<name>CG121_YEAST</name>
<comment type="function">
    <text evidence="1 2 3 4 5 6">Component of the EKC/KEOPS complex that is required for the formation of a threonylcarbamoyl group on adenosine at position 37 (t(6)A37) in tRNAs that read codons beginning with adenine. The complex is probably involved in the transfer of the threonylcarbamoyl moiety of threonylcarbamoyl-AMP (TC-AMP) to the N6 group of A37. CGI121 acts as an allosteric effector that regulates the t(6)A activity of the complex. The EKC/KEOPS complex also promotes both telomere uncapping and telomere elongation. The complex is required for efficient recruitment of transcriptional coactivators. CGI121 is not required for tRNA modification.</text>
</comment>
<comment type="subunit">
    <text evidence="1 2">Component of the EKC/KEOPS complex composed of at least BUD32, CGI121, GON7, KAE1 and PCC1; the whole complex dimerizes.</text>
</comment>
<comment type="interaction">
    <interactant intactId="EBI-912262">
        <id>Q03705</id>
    </interactant>
    <interactant intactId="EBI-3809">
        <id>P53323</id>
        <label>BUD32</label>
    </interactant>
    <organismsDiffer>false</organismsDiffer>
    <experiments>10</experiments>
</comment>
<comment type="interaction">
    <interactant intactId="EBI-912262">
        <id>Q03705</id>
    </interactant>
    <interactant intactId="EBI-1200990">
        <id>Q3E833</id>
        <label>PCC1</label>
    </interactant>
    <organismsDiffer>false</organismsDiffer>
    <experiments>3</experiments>
</comment>
<comment type="subcellular location">
    <subcellularLocation>
        <location evidence="7">Nucleus</location>
    </subcellularLocation>
    <subcellularLocation>
        <location evidence="7">Chromosome</location>
        <location evidence="7">Telomere</location>
    </subcellularLocation>
</comment>
<comment type="similarity">
    <text evidence="7">Belongs to the CGI121/TPRKB family.</text>
</comment>
<comment type="sequence caution" evidence="7">
    <conflict type="erroneous gene model prediction">
        <sequence resource="EMBL-CDS" id="AAS56559"/>
    </conflict>
</comment>
<comment type="sequence caution" evidence="7">
    <conflict type="erroneous gene model prediction">
        <sequence resource="EMBL-CDS" id="CAA86619"/>
    </conflict>
</comment>
<keyword id="KW-0002">3D-structure</keyword>
<keyword id="KW-0010">Activator</keyword>
<keyword id="KW-0158">Chromosome</keyword>
<keyword id="KW-0539">Nucleus</keyword>
<keyword id="KW-1185">Reference proteome</keyword>
<keyword id="KW-0779">Telomere</keyword>
<keyword id="KW-0804">Transcription</keyword>
<keyword id="KW-0805">Transcription regulation</keyword>
<keyword id="KW-0819">tRNA processing</keyword>
<feature type="chain" id="PRO_0000203259" description="EKC/KEOPS complex subunit CGI121">
    <location>
        <begin position="1"/>
        <end position="181"/>
    </location>
</feature>
<feature type="strand" evidence="9">
    <location>
        <begin position="2"/>
        <end position="6"/>
    </location>
</feature>
<feature type="strand" evidence="9">
    <location>
        <begin position="9"/>
        <end position="21"/>
    </location>
</feature>
<feature type="helix" evidence="9">
    <location>
        <begin position="25"/>
        <end position="30"/>
    </location>
</feature>
<feature type="turn" evidence="8">
    <location>
        <begin position="31"/>
        <end position="34"/>
    </location>
</feature>
<feature type="turn" evidence="11">
    <location>
        <begin position="36"/>
        <end position="38"/>
    </location>
</feature>
<feature type="strand" evidence="9">
    <location>
        <begin position="40"/>
        <end position="42"/>
    </location>
</feature>
<feature type="helix" evidence="9">
    <location>
        <begin position="44"/>
        <end position="46"/>
    </location>
</feature>
<feature type="helix" evidence="9">
    <location>
        <begin position="50"/>
        <end position="66"/>
    </location>
</feature>
<feature type="strand" evidence="9">
    <location>
        <begin position="71"/>
        <end position="73"/>
    </location>
</feature>
<feature type="helix" evidence="9">
    <location>
        <begin position="74"/>
        <end position="82"/>
    </location>
</feature>
<feature type="strand" evidence="9">
    <location>
        <begin position="83"/>
        <end position="85"/>
    </location>
</feature>
<feature type="helix" evidence="9">
    <location>
        <begin position="88"/>
        <end position="95"/>
    </location>
</feature>
<feature type="strand" evidence="9">
    <location>
        <begin position="104"/>
        <end position="110"/>
    </location>
</feature>
<feature type="strand" evidence="10">
    <location>
        <begin position="112"/>
        <end position="114"/>
    </location>
</feature>
<feature type="helix" evidence="9">
    <location>
        <begin position="118"/>
        <end position="128"/>
    </location>
</feature>
<feature type="strand" evidence="9">
    <location>
        <begin position="131"/>
        <end position="134"/>
    </location>
</feature>
<feature type="helix" evidence="9">
    <location>
        <begin position="138"/>
        <end position="144"/>
    </location>
</feature>
<feature type="helix" evidence="9">
    <location>
        <begin position="147"/>
        <end position="153"/>
    </location>
</feature>
<feature type="helix" evidence="9">
    <location>
        <begin position="165"/>
        <end position="178"/>
    </location>
</feature>
<dbReference type="EMBL" id="Z46659">
    <property type="protein sequence ID" value="CAA86619.1"/>
    <property type="status" value="ALT_SEQ"/>
    <property type="molecule type" value="Genomic_DNA"/>
</dbReference>
<dbReference type="EMBL" id="EF123129">
    <property type="protein sequence ID" value="ABM97473.1"/>
    <property type="molecule type" value="mRNA"/>
</dbReference>
<dbReference type="EMBL" id="AY558233">
    <property type="protein sequence ID" value="AAS56559.1"/>
    <property type="status" value="ALT_SEQ"/>
    <property type="molecule type" value="Genomic_DNA"/>
</dbReference>
<dbReference type="EMBL" id="BK006946">
    <property type="protein sequence ID" value="DAA09863.1"/>
    <property type="molecule type" value="Genomic_DNA"/>
</dbReference>
<dbReference type="PIR" id="S49743">
    <property type="entry name" value="S49743"/>
</dbReference>
<dbReference type="RefSeq" id="NP_013676.2">
    <property type="nucleotide sequence ID" value="NM_001182394.1"/>
</dbReference>
<dbReference type="PDB" id="4WW5">
    <property type="method" value="X-ray"/>
    <property type="resolution" value="2.00 A"/>
    <property type="chains" value="B=1-181"/>
</dbReference>
<dbReference type="PDB" id="4WW7">
    <property type="method" value="X-ray"/>
    <property type="resolution" value="1.67 A"/>
    <property type="chains" value="B=1-181"/>
</dbReference>
<dbReference type="PDB" id="4WW9">
    <property type="method" value="X-ray"/>
    <property type="resolution" value="1.95 A"/>
    <property type="chains" value="B=1-181"/>
</dbReference>
<dbReference type="PDB" id="4WWA">
    <property type="method" value="X-ray"/>
    <property type="resolution" value="2.95 A"/>
    <property type="chains" value="B=1-181"/>
</dbReference>
<dbReference type="PDB" id="4XAH">
    <property type="method" value="X-ray"/>
    <property type="resolution" value="2.50 A"/>
    <property type="chains" value="A/B=1-181"/>
</dbReference>
<dbReference type="PDBsum" id="4WW5"/>
<dbReference type="PDBsum" id="4WW7"/>
<dbReference type="PDBsum" id="4WW9"/>
<dbReference type="PDBsum" id="4WWA"/>
<dbReference type="PDBsum" id="4XAH"/>
<dbReference type="SMR" id="Q03705"/>
<dbReference type="BioGRID" id="35134">
    <property type="interactions" value="106"/>
</dbReference>
<dbReference type="ComplexPortal" id="CPX-995">
    <property type="entry name" value="KEOPS tRNA N6-adenosine threonylcarbamoyltransferase complex"/>
</dbReference>
<dbReference type="DIP" id="DIP-6420N"/>
<dbReference type="FunCoup" id="Q03705">
    <property type="interactions" value="565"/>
</dbReference>
<dbReference type="IntAct" id="Q03705">
    <property type="interactions" value="7"/>
</dbReference>
<dbReference type="MINT" id="Q03705"/>
<dbReference type="STRING" id="4932.YML036W"/>
<dbReference type="PaxDb" id="4932-YML036W"/>
<dbReference type="PeptideAtlas" id="Q03705"/>
<dbReference type="EnsemblFungi" id="YML036W_mRNA">
    <property type="protein sequence ID" value="YML036W"/>
    <property type="gene ID" value="YML036W"/>
</dbReference>
<dbReference type="GeneID" id="854972"/>
<dbReference type="KEGG" id="sce:YML036W"/>
<dbReference type="AGR" id="SGD:S000004500"/>
<dbReference type="SGD" id="S000004500">
    <property type="gene designation" value="CGI121"/>
</dbReference>
<dbReference type="VEuPathDB" id="FungiDB:YML036W"/>
<dbReference type="eggNOG" id="KOG4066">
    <property type="taxonomic scope" value="Eukaryota"/>
</dbReference>
<dbReference type="GeneTree" id="ENSGT00390000012942"/>
<dbReference type="HOGENOM" id="CLU_065847_1_1_1"/>
<dbReference type="InParanoid" id="Q03705"/>
<dbReference type="OMA" id="IVCRMST"/>
<dbReference type="OrthoDB" id="329139at2759"/>
<dbReference type="BioCyc" id="MetaCyc:G3O-32635-MONOMER"/>
<dbReference type="BioCyc" id="YEAST:G3O-32635-MONOMER"/>
<dbReference type="BioGRID-ORCS" id="854972">
    <property type="hits" value="0 hits in 10 CRISPR screens"/>
</dbReference>
<dbReference type="EvolutionaryTrace" id="Q03705"/>
<dbReference type="PRO" id="PR:Q03705"/>
<dbReference type="Proteomes" id="UP000002311">
    <property type="component" value="Chromosome XIII"/>
</dbReference>
<dbReference type="RNAct" id="Q03705">
    <property type="molecule type" value="protein"/>
</dbReference>
<dbReference type="GO" id="GO:0000781">
    <property type="term" value="C:chromosome, telomeric region"/>
    <property type="evidence" value="ECO:0007669"/>
    <property type="project" value="UniProtKB-SubCell"/>
</dbReference>
<dbReference type="GO" id="GO:0005829">
    <property type="term" value="C:cytosol"/>
    <property type="evidence" value="ECO:0000318"/>
    <property type="project" value="GO_Central"/>
</dbReference>
<dbReference type="GO" id="GO:0000408">
    <property type="term" value="C:EKC/KEOPS complex"/>
    <property type="evidence" value="ECO:0000314"/>
    <property type="project" value="SGD"/>
</dbReference>
<dbReference type="GO" id="GO:0005654">
    <property type="term" value="C:nucleoplasm"/>
    <property type="evidence" value="ECO:0000304"/>
    <property type="project" value="Reactome"/>
</dbReference>
<dbReference type="GO" id="GO:0005634">
    <property type="term" value="C:nucleus"/>
    <property type="evidence" value="ECO:0000318"/>
    <property type="project" value="GO_Central"/>
</dbReference>
<dbReference type="GO" id="GO:0000049">
    <property type="term" value="F:tRNA binding"/>
    <property type="evidence" value="ECO:0000314"/>
    <property type="project" value="SGD"/>
</dbReference>
<dbReference type="GO" id="GO:0006310">
    <property type="term" value="P:DNA recombination"/>
    <property type="evidence" value="ECO:0000315"/>
    <property type="project" value="SGD"/>
</dbReference>
<dbReference type="GO" id="GO:1990145">
    <property type="term" value="P:maintenance of translational fidelity"/>
    <property type="evidence" value="ECO:0000303"/>
    <property type="project" value="ComplexPortal"/>
</dbReference>
<dbReference type="GO" id="GO:0045944">
    <property type="term" value="P:positive regulation of transcription by RNA polymerase II"/>
    <property type="evidence" value="ECO:0000353"/>
    <property type="project" value="SGD"/>
</dbReference>
<dbReference type="GO" id="GO:0000723">
    <property type="term" value="P:telomere maintenance"/>
    <property type="evidence" value="ECO:0000315"/>
    <property type="project" value="SGD"/>
</dbReference>
<dbReference type="GO" id="GO:0000722">
    <property type="term" value="P:telomere maintenance via recombination"/>
    <property type="evidence" value="ECO:0000315"/>
    <property type="project" value="SGD"/>
</dbReference>
<dbReference type="GO" id="GO:0002949">
    <property type="term" value="P:tRNA threonylcarbamoyladenosine modification"/>
    <property type="evidence" value="ECO:0000318"/>
    <property type="project" value="GO_Central"/>
</dbReference>
<dbReference type="FunFam" id="3.30.2380.10:FF:000004">
    <property type="entry name" value="EKC/KEOPS complex subunit CGI121"/>
    <property type="match status" value="1"/>
</dbReference>
<dbReference type="Gene3D" id="3.30.2380.10">
    <property type="entry name" value="CGI121/TPRKB"/>
    <property type="match status" value="1"/>
</dbReference>
<dbReference type="InterPro" id="IPR013926">
    <property type="entry name" value="CGI121/TPRKB"/>
</dbReference>
<dbReference type="InterPro" id="IPR036504">
    <property type="entry name" value="CGI121/TPRKB_sf"/>
</dbReference>
<dbReference type="PANTHER" id="PTHR15840">
    <property type="entry name" value="CGI-121 FAMILY MEMBER"/>
    <property type="match status" value="1"/>
</dbReference>
<dbReference type="PANTHER" id="PTHR15840:SF10">
    <property type="entry name" value="EKC_KEOPS COMPLEX SUBUNIT TPRKB"/>
    <property type="match status" value="1"/>
</dbReference>
<dbReference type="Pfam" id="PF08617">
    <property type="entry name" value="CGI-121"/>
    <property type="match status" value="1"/>
</dbReference>
<dbReference type="SUPFAM" id="SSF143870">
    <property type="entry name" value="PF0523-like"/>
    <property type="match status" value="1"/>
</dbReference>
<proteinExistence type="evidence at protein level"/>
<reference key="1">
    <citation type="journal article" date="1997" name="Nature">
        <title>The nucleotide sequence of Saccharomyces cerevisiae chromosome XIII.</title>
        <authorList>
            <person name="Bowman S."/>
            <person name="Churcher C.M."/>
            <person name="Badcock K."/>
            <person name="Brown D."/>
            <person name="Chillingworth T."/>
            <person name="Connor R."/>
            <person name="Dedman K."/>
            <person name="Devlin K."/>
            <person name="Gentles S."/>
            <person name="Hamlin N."/>
            <person name="Hunt S."/>
            <person name="Jagels K."/>
            <person name="Lye G."/>
            <person name="Moule S."/>
            <person name="Odell C."/>
            <person name="Pearson D."/>
            <person name="Rajandream M.A."/>
            <person name="Rice P."/>
            <person name="Skelton J."/>
            <person name="Walsh S.V."/>
            <person name="Whitehead S."/>
            <person name="Barrell B.G."/>
        </authorList>
    </citation>
    <scope>NUCLEOTIDE SEQUENCE [LARGE SCALE GENOMIC DNA]</scope>
    <source>
        <strain>ATCC 204508 / S288c</strain>
    </source>
</reference>
<reference key="2">
    <citation type="journal article" date="2014" name="G3 (Bethesda)">
        <title>The reference genome sequence of Saccharomyces cerevisiae: Then and now.</title>
        <authorList>
            <person name="Engel S.R."/>
            <person name="Dietrich F.S."/>
            <person name="Fisk D.G."/>
            <person name="Binkley G."/>
            <person name="Balakrishnan R."/>
            <person name="Costanzo M.C."/>
            <person name="Dwight S.S."/>
            <person name="Hitz B.C."/>
            <person name="Karra K."/>
            <person name="Nash R.S."/>
            <person name="Weng S."/>
            <person name="Wong E.D."/>
            <person name="Lloyd P."/>
            <person name="Skrzypek M.S."/>
            <person name="Miyasato S.R."/>
            <person name="Simison M."/>
            <person name="Cherry J.M."/>
        </authorList>
    </citation>
    <scope>GENOME REANNOTATION</scope>
    <source>
        <strain>ATCC 204508 / S288c</strain>
    </source>
</reference>
<reference key="3">
    <citation type="journal article" date="2007" name="Proc. Natl. Acad. Sci. U.S.A.">
        <title>High-density yeast-tiling array reveals previously undiscovered introns and extensive regulation of meiotic splicing.</title>
        <authorList>
            <person name="Juneau K."/>
            <person name="Palm C."/>
            <person name="Miranda M."/>
            <person name="Davis R.W."/>
        </authorList>
    </citation>
    <scope>NUCLEOTIDE SEQUENCE [MRNA] OF 1-179</scope>
    <source>
        <strain>ATCC 201390 / BY4743</strain>
    </source>
</reference>
<reference key="4">
    <citation type="journal article" date="2007" name="Genome Res.">
        <title>Approaching a complete repository of sequence-verified protein-encoding clones for Saccharomyces cerevisiae.</title>
        <authorList>
            <person name="Hu Y."/>
            <person name="Rolfs A."/>
            <person name="Bhullar B."/>
            <person name="Murthy T.V.S."/>
            <person name="Zhu C."/>
            <person name="Berger M.F."/>
            <person name="Camargo A.A."/>
            <person name="Kelley F."/>
            <person name="McCarron S."/>
            <person name="Jepson D."/>
            <person name="Richardson A."/>
            <person name="Raphael J."/>
            <person name="Moreira D."/>
            <person name="Taycher E."/>
            <person name="Zuo D."/>
            <person name="Mohr S."/>
            <person name="Kane M.F."/>
            <person name="Williamson J."/>
            <person name="Simpson A.J.G."/>
            <person name="Bulyk M.L."/>
            <person name="Harlow E."/>
            <person name="Marsischky G."/>
            <person name="Kolodner R.D."/>
            <person name="LaBaer J."/>
        </authorList>
    </citation>
    <scope>NUCLEOTIDE SEQUENCE [GENOMIC DNA] OF 1-154</scope>
    <source>
        <strain>ATCC 204508 / S288c</strain>
    </source>
</reference>
<reference key="5">
    <citation type="journal article" date="2006" name="EMBO J.">
        <title>Yeast homolog of a cancer-testis antigen defines a new transcription complex.</title>
        <authorList>
            <person name="Kisseleva-Romanova E."/>
            <person name="Lopreiato R."/>
            <person name="Baudin-Baillieu A."/>
            <person name="Rousselle J.-C."/>
            <person name="Ilan L."/>
            <person name="Hofmann K."/>
            <person name="Namane A."/>
            <person name="Mann C."/>
            <person name="Libri D."/>
        </authorList>
    </citation>
    <scope>IDENTIFICATION IN THE EKC/KEOPS COMPLEX</scope>
    <scope>FUNCTION OF THE EKC/KEOPS COMPLEX</scope>
    <scope>IDENTIFICATION BY MASS SPECTROMETRY</scope>
</reference>
<reference key="6">
    <citation type="journal article" date="2006" name="Proc. Natl. Acad. Sci. U.S.A.">
        <title>A large-scale full-length cDNA analysis to explore the budding yeast transcriptome.</title>
        <authorList>
            <person name="Miura F."/>
            <person name="Kawaguchi N."/>
            <person name="Sese J."/>
            <person name="Toyoda A."/>
            <person name="Hattori M."/>
            <person name="Morishita S."/>
            <person name="Ito T."/>
        </authorList>
    </citation>
    <scope>IDENTIFICATION OF INTRON</scope>
</reference>
<reference key="7">
    <citation type="journal article" date="2006" name="Cell">
        <title>A genome-wide screen identifies the evolutionarily conserved KEOPS complex as a telomere regulator.</title>
        <authorList>
            <person name="Downey M."/>
            <person name="Houlsworth R."/>
            <person name="Maringele L."/>
            <person name="Rollie A."/>
            <person name="Brehme M."/>
            <person name="Galicia S."/>
            <person name="Guillard S."/>
            <person name="Partington M."/>
            <person name="Zubko M.K."/>
            <person name="Krogan N.J."/>
            <person name="Emili A."/>
            <person name="Greenblatt J.F."/>
            <person name="Harrington L."/>
            <person name="Lydall D."/>
            <person name="Durocher D."/>
        </authorList>
    </citation>
    <scope>FUNCTION</scope>
    <scope>IDENTIFICATION IN THE EKC/KEOPS COMPLEX</scope>
</reference>
<reference key="8">
    <citation type="journal article" date="2011" name="EMBO J.">
        <title>The highly conserved KEOPS/EKC complex is essential for a universal tRNA modification, t6A.</title>
        <authorList>
            <person name="Srinivasan M."/>
            <person name="Mehta P."/>
            <person name="Yu Y."/>
            <person name="Prugar E."/>
            <person name="Koonin E.V."/>
            <person name="Karzai A.W."/>
            <person name="Sternglanz R."/>
        </authorList>
    </citation>
    <scope>FUNCTION IN T(6)A37 FORMATION</scope>
</reference>
<reference key="9">
    <citation type="journal article" date="2011" name="Nucleic Acids Res.">
        <title>Gcn4 misregulation reveals a direct role for the evolutionary conserved EKC/KEOPS in the t6A modification of tRNAs.</title>
        <authorList>
            <person name="Daugeron M.C."/>
            <person name="Lenstra T.L."/>
            <person name="Frizzarin M."/>
            <person name="El Yacoubi B."/>
            <person name="Liu X."/>
            <person name="Baudin-Baillieu A."/>
            <person name="Lijnzaad P."/>
            <person name="Decourty L."/>
            <person name="Saveanu C."/>
            <person name="Jacquier A."/>
            <person name="Holstege F.C."/>
            <person name="de Crecy-Lagard V."/>
            <person name="van Tilbeurgh H."/>
            <person name="Libri D."/>
        </authorList>
    </citation>
    <scope>FUNCTION IN T(6)A37 FORMATION</scope>
</reference>
<reference key="10">
    <citation type="journal article" date="2013" name="Nucleic Acids Res.">
        <title>In vitro biosynthesis of a universal t6A tRNA modification in Archaea and Eukarya.</title>
        <authorList>
            <person name="Perrochia L."/>
            <person name="Crozat E."/>
            <person name="Hecker A."/>
            <person name="Zhang W."/>
            <person name="Bareille J."/>
            <person name="Collinet B."/>
            <person name="van Tilbeurgh H."/>
            <person name="Forterre P."/>
            <person name="Basta T."/>
        </authorList>
    </citation>
    <scope>FUNCTION IN T(6)A37 FORMATION</scope>
</reference>
<reference key="11">
    <citation type="journal article" date="2013" name="Nucleic Acids Res.">
        <title>Reconstitution and characterization of eukaryotic N6-threonylcarbamoylation of tRNA using a minimal enzyme system.</title>
        <authorList>
            <person name="Wan L.C."/>
            <person name="Mao D.Y."/>
            <person name="Neculai D."/>
            <person name="Strecker J."/>
            <person name="Chiovitti D."/>
            <person name="Kurinov I."/>
            <person name="Poda G."/>
            <person name="Thevakumaran N."/>
            <person name="Yuan F."/>
            <person name="Szilard R.K."/>
            <person name="Lissina E."/>
            <person name="Nislow C."/>
            <person name="Caudy A.A."/>
            <person name="Durocher D."/>
            <person name="Sicheri F."/>
        </authorList>
    </citation>
    <scope>FUNCTION IN THE EKC/KEOPS COMPLEX</scope>
</reference>
<accession>Q03705</accession>
<accession>A2TBM6</accession>
<accession>D6VZD9</accession>
<accession>Q6Q5A2</accession>
<organism>
    <name type="scientific">Saccharomyces cerevisiae (strain ATCC 204508 / S288c)</name>
    <name type="common">Baker's yeast</name>
    <dbReference type="NCBI Taxonomy" id="559292"/>
    <lineage>
        <taxon>Eukaryota</taxon>
        <taxon>Fungi</taxon>
        <taxon>Dikarya</taxon>
        <taxon>Ascomycota</taxon>
        <taxon>Saccharomycotina</taxon>
        <taxon>Saccharomycetes</taxon>
        <taxon>Saccharomycetales</taxon>
        <taxon>Saccharomycetaceae</taxon>
        <taxon>Saccharomyces</taxon>
    </lineage>
</organism>
<gene>
    <name type="primary">CGI121</name>
    <name type="ordered locus">YML036W</name>
</gene>